<feature type="chain" id="PRO_1000053525" description="Phosphatidylglycerol--prolipoprotein diacylglyceryl transferase">
    <location>
        <begin position="1"/>
        <end position="263"/>
    </location>
</feature>
<feature type="transmembrane region" description="Helical" evidence="1">
    <location>
        <begin position="7"/>
        <end position="27"/>
    </location>
</feature>
<feature type="transmembrane region" description="Helical" evidence="1">
    <location>
        <begin position="50"/>
        <end position="70"/>
    </location>
</feature>
<feature type="transmembrane region" description="Helical" evidence="1">
    <location>
        <begin position="85"/>
        <end position="105"/>
    </location>
</feature>
<feature type="transmembrane region" description="Helical" evidence="1">
    <location>
        <begin position="112"/>
        <end position="132"/>
    </location>
</feature>
<feature type="transmembrane region" description="Helical" evidence="1">
    <location>
        <begin position="169"/>
        <end position="189"/>
    </location>
</feature>
<feature type="transmembrane region" description="Helical" evidence="1">
    <location>
        <begin position="197"/>
        <end position="217"/>
    </location>
</feature>
<feature type="transmembrane region" description="Helical" evidence="1">
    <location>
        <begin position="233"/>
        <end position="253"/>
    </location>
</feature>
<feature type="binding site" evidence="1">
    <location>
        <position position="133"/>
    </location>
    <ligand>
        <name>a 1,2-diacyl-sn-glycero-3-phospho-(1'-sn-glycerol)</name>
        <dbReference type="ChEBI" id="CHEBI:64716"/>
    </ligand>
</feature>
<sequence>MSLSPAIFSIGPVSIHWYSLAYVLGIVFAYWHLHKLDEQKIFTKNFYDSLLTATIIGIILGGRLGFVLIYDPISYINNPIEILKTWKGGMSFHGGAIGVLCAVIISCRRYNIPIFYTLDLISCGVPIGLFLGRIGNFVNGELFGRVTTMPWGMVFPESGDNLLRHPSQLYEAFFEGLLFFAIANSLFFLTRIRLYHGTLTGIAVIWYGTVRFVVEFFREPDYQVGYLWLDLTMGQLLSIFMTLLGIIVYLSALNSKFNTKSVA</sequence>
<dbReference type="EC" id="2.5.1.145" evidence="1"/>
<dbReference type="EMBL" id="AE017321">
    <property type="protein sequence ID" value="AAW70671.1"/>
    <property type="molecule type" value="Genomic_DNA"/>
</dbReference>
<dbReference type="RefSeq" id="WP_011256281.1">
    <property type="nucleotide sequence ID" value="NC_006833.1"/>
</dbReference>
<dbReference type="SMR" id="Q5GTK3"/>
<dbReference type="STRING" id="292805.Wbm0079"/>
<dbReference type="KEGG" id="wbm:Wbm0079"/>
<dbReference type="eggNOG" id="COG0682">
    <property type="taxonomic scope" value="Bacteria"/>
</dbReference>
<dbReference type="HOGENOM" id="CLU_013386_1_0_5"/>
<dbReference type="UniPathway" id="UPA00664"/>
<dbReference type="Proteomes" id="UP000000534">
    <property type="component" value="Chromosome"/>
</dbReference>
<dbReference type="GO" id="GO:0005886">
    <property type="term" value="C:plasma membrane"/>
    <property type="evidence" value="ECO:0007669"/>
    <property type="project" value="UniProtKB-SubCell"/>
</dbReference>
<dbReference type="GO" id="GO:0008961">
    <property type="term" value="F:phosphatidylglycerol-prolipoprotein diacylglyceryl transferase activity"/>
    <property type="evidence" value="ECO:0007669"/>
    <property type="project" value="UniProtKB-UniRule"/>
</dbReference>
<dbReference type="GO" id="GO:0042158">
    <property type="term" value="P:lipoprotein biosynthetic process"/>
    <property type="evidence" value="ECO:0007669"/>
    <property type="project" value="UniProtKB-UniRule"/>
</dbReference>
<dbReference type="HAMAP" id="MF_01147">
    <property type="entry name" value="Lgt"/>
    <property type="match status" value="1"/>
</dbReference>
<dbReference type="InterPro" id="IPR001640">
    <property type="entry name" value="Lgt"/>
</dbReference>
<dbReference type="NCBIfam" id="TIGR00544">
    <property type="entry name" value="lgt"/>
    <property type="match status" value="1"/>
</dbReference>
<dbReference type="PANTHER" id="PTHR30589:SF0">
    <property type="entry name" value="PHOSPHATIDYLGLYCEROL--PROLIPOPROTEIN DIACYLGLYCERYL TRANSFERASE"/>
    <property type="match status" value="1"/>
</dbReference>
<dbReference type="PANTHER" id="PTHR30589">
    <property type="entry name" value="PROLIPOPROTEIN DIACYLGLYCERYL TRANSFERASE"/>
    <property type="match status" value="1"/>
</dbReference>
<dbReference type="Pfam" id="PF01790">
    <property type="entry name" value="LGT"/>
    <property type="match status" value="1"/>
</dbReference>
<dbReference type="PROSITE" id="PS01311">
    <property type="entry name" value="LGT"/>
    <property type="match status" value="1"/>
</dbReference>
<reference key="1">
    <citation type="journal article" date="2005" name="PLoS Biol.">
        <title>The Wolbachia genome of Brugia malayi: endosymbiont evolution within a human pathogenic nematode.</title>
        <authorList>
            <person name="Foster J."/>
            <person name="Ganatra M."/>
            <person name="Kamal I."/>
            <person name="Ware J."/>
            <person name="Makarova K."/>
            <person name="Ivanova N."/>
            <person name="Bhattacharyya A."/>
            <person name="Kapatral V."/>
            <person name="Kumar S."/>
            <person name="Posfai J."/>
            <person name="Vincze T."/>
            <person name="Ingram J."/>
            <person name="Moran L."/>
            <person name="Lapidus A."/>
            <person name="Omelchenko M."/>
            <person name="Kyrpides N."/>
            <person name="Ghedin E."/>
            <person name="Wang S."/>
            <person name="Goltsman E."/>
            <person name="Joukov V."/>
            <person name="Ostrovskaya O."/>
            <person name="Tsukerman K."/>
            <person name="Mazur M."/>
            <person name="Comb D."/>
            <person name="Koonin E."/>
            <person name="Slatko B."/>
        </authorList>
    </citation>
    <scope>NUCLEOTIDE SEQUENCE [LARGE SCALE GENOMIC DNA]</scope>
    <source>
        <strain>TRS</strain>
    </source>
</reference>
<name>LGT_WOLTR</name>
<protein>
    <recommendedName>
        <fullName evidence="1">Phosphatidylglycerol--prolipoprotein diacylglyceryl transferase</fullName>
        <ecNumber evidence="1">2.5.1.145</ecNumber>
    </recommendedName>
</protein>
<evidence type="ECO:0000255" key="1">
    <source>
        <dbReference type="HAMAP-Rule" id="MF_01147"/>
    </source>
</evidence>
<comment type="function">
    <text evidence="1">Catalyzes the transfer of the diacylglyceryl group from phosphatidylglycerol to the sulfhydryl group of the N-terminal cysteine of a prolipoprotein, the first step in the formation of mature lipoproteins.</text>
</comment>
<comment type="catalytic activity">
    <reaction evidence="1">
        <text>L-cysteinyl-[prolipoprotein] + a 1,2-diacyl-sn-glycero-3-phospho-(1'-sn-glycerol) = an S-1,2-diacyl-sn-glyceryl-L-cysteinyl-[prolipoprotein] + sn-glycerol 1-phosphate + H(+)</text>
        <dbReference type="Rhea" id="RHEA:56712"/>
        <dbReference type="Rhea" id="RHEA-COMP:14679"/>
        <dbReference type="Rhea" id="RHEA-COMP:14680"/>
        <dbReference type="ChEBI" id="CHEBI:15378"/>
        <dbReference type="ChEBI" id="CHEBI:29950"/>
        <dbReference type="ChEBI" id="CHEBI:57685"/>
        <dbReference type="ChEBI" id="CHEBI:64716"/>
        <dbReference type="ChEBI" id="CHEBI:140658"/>
        <dbReference type="EC" id="2.5.1.145"/>
    </reaction>
</comment>
<comment type="pathway">
    <text evidence="1">Protein modification; lipoprotein biosynthesis (diacylglyceryl transfer).</text>
</comment>
<comment type="subcellular location">
    <subcellularLocation>
        <location evidence="1">Cell membrane</location>
        <topology evidence="1">Multi-pass membrane protein</topology>
    </subcellularLocation>
</comment>
<comment type="similarity">
    <text evidence="1">Belongs to the Lgt family.</text>
</comment>
<accession>Q5GTK3</accession>
<gene>
    <name evidence="1" type="primary">lgt</name>
    <name type="ordered locus">Wbm0079</name>
</gene>
<keyword id="KW-1003">Cell membrane</keyword>
<keyword id="KW-0472">Membrane</keyword>
<keyword id="KW-1185">Reference proteome</keyword>
<keyword id="KW-0808">Transferase</keyword>
<keyword id="KW-0812">Transmembrane</keyword>
<keyword id="KW-1133">Transmembrane helix</keyword>
<organism>
    <name type="scientific">Wolbachia sp. subsp. Brugia malayi (strain TRS)</name>
    <dbReference type="NCBI Taxonomy" id="292805"/>
    <lineage>
        <taxon>Bacteria</taxon>
        <taxon>Pseudomonadati</taxon>
        <taxon>Pseudomonadota</taxon>
        <taxon>Alphaproteobacteria</taxon>
        <taxon>Rickettsiales</taxon>
        <taxon>Anaplasmataceae</taxon>
        <taxon>Wolbachieae</taxon>
        <taxon>Wolbachia</taxon>
    </lineage>
</organism>
<proteinExistence type="inferred from homology"/>